<organism>
    <name type="scientific">Caldicellulosiruptor bescii (strain ATCC BAA-1888 / DSM 6725 / KCTC 15123 / Z-1320)</name>
    <name type="common">Anaerocellum thermophilum</name>
    <dbReference type="NCBI Taxonomy" id="521460"/>
    <lineage>
        <taxon>Bacteria</taxon>
        <taxon>Bacillati</taxon>
        <taxon>Bacillota</taxon>
        <taxon>Bacillota incertae sedis</taxon>
        <taxon>Caldicellulosiruptorales</taxon>
        <taxon>Caldicellulosiruptoraceae</taxon>
        <taxon>Caldicellulosiruptor</taxon>
    </lineage>
</organism>
<accession>B9MR75</accession>
<protein>
    <recommendedName>
        <fullName evidence="1">Acetylglutamate kinase</fullName>
        <ecNumber evidence="1">2.7.2.8</ecNumber>
    </recommendedName>
    <alternativeName>
        <fullName evidence="1">N-acetyl-L-glutamate 5-phosphotransferase</fullName>
    </alternativeName>
    <alternativeName>
        <fullName evidence="1">NAG kinase</fullName>
        <shortName evidence="1">NAGK</shortName>
    </alternativeName>
</protein>
<sequence>MYEEMDSLIEKASILIEALPYIQKLYGKTVVIKYGGNAMINEKLKNWVMEDITLLKYIGVNPIVVHGGGPDINSVLKKLNVESQFVNGLRVTDMQTMEVAQMVLVGKTNKELVSMLNQKGGKAIGICGIDGNLIQARKHYEYVNGEKIDLGYVGEVVSINAKVLEMLAKDEYIPVVAPIGVGEDGTSYNINADTVAAEIAKAIKAEKLMFMTDVEGLKYDKNSKKIISAISADEVLKMIEEGKIDGGMIPKVLGCIDALKHGVNRTHILDGRIPHCILLEIFTDKGIGTMIHL</sequence>
<evidence type="ECO:0000255" key="1">
    <source>
        <dbReference type="HAMAP-Rule" id="MF_00082"/>
    </source>
</evidence>
<feature type="chain" id="PRO_1000118331" description="Acetylglutamate kinase">
    <location>
        <begin position="1"/>
        <end position="293"/>
    </location>
</feature>
<feature type="binding site" evidence="1">
    <location>
        <begin position="68"/>
        <end position="69"/>
    </location>
    <ligand>
        <name>substrate</name>
    </ligand>
</feature>
<feature type="binding site" evidence="1">
    <location>
        <position position="90"/>
    </location>
    <ligand>
        <name>substrate</name>
    </ligand>
</feature>
<feature type="binding site" evidence="1">
    <location>
        <position position="189"/>
    </location>
    <ligand>
        <name>substrate</name>
    </ligand>
</feature>
<feature type="site" description="Transition state stabilizer" evidence="1">
    <location>
        <position position="33"/>
    </location>
</feature>
<feature type="site" description="Transition state stabilizer" evidence="1">
    <location>
        <position position="251"/>
    </location>
</feature>
<keyword id="KW-0028">Amino-acid biosynthesis</keyword>
<keyword id="KW-0055">Arginine biosynthesis</keyword>
<keyword id="KW-0067">ATP-binding</keyword>
<keyword id="KW-0963">Cytoplasm</keyword>
<keyword id="KW-0418">Kinase</keyword>
<keyword id="KW-0547">Nucleotide-binding</keyword>
<keyword id="KW-0808">Transferase</keyword>
<gene>
    <name evidence="1" type="primary">argB</name>
    <name type="ordered locus">Athe_1078</name>
</gene>
<name>ARGB_CALBD</name>
<proteinExistence type="inferred from homology"/>
<comment type="function">
    <text evidence="1">Catalyzes the ATP-dependent phosphorylation of N-acetyl-L-glutamate.</text>
</comment>
<comment type="catalytic activity">
    <reaction evidence="1">
        <text>N-acetyl-L-glutamate + ATP = N-acetyl-L-glutamyl 5-phosphate + ADP</text>
        <dbReference type="Rhea" id="RHEA:14629"/>
        <dbReference type="ChEBI" id="CHEBI:30616"/>
        <dbReference type="ChEBI" id="CHEBI:44337"/>
        <dbReference type="ChEBI" id="CHEBI:57936"/>
        <dbReference type="ChEBI" id="CHEBI:456216"/>
        <dbReference type="EC" id="2.7.2.8"/>
    </reaction>
</comment>
<comment type="pathway">
    <text evidence="1">Amino-acid biosynthesis; L-arginine biosynthesis; N(2)-acetyl-L-ornithine from L-glutamate: step 2/4.</text>
</comment>
<comment type="subcellular location">
    <subcellularLocation>
        <location evidence="1">Cytoplasm</location>
    </subcellularLocation>
</comment>
<comment type="similarity">
    <text evidence="1">Belongs to the acetylglutamate kinase family. ArgB subfamily.</text>
</comment>
<reference key="1">
    <citation type="submission" date="2009-01" db="EMBL/GenBank/DDBJ databases">
        <title>Complete sequence of chromosome of Caldicellulosiruptor becscii DSM 6725.</title>
        <authorList>
            <person name="Lucas S."/>
            <person name="Copeland A."/>
            <person name="Lapidus A."/>
            <person name="Glavina del Rio T."/>
            <person name="Tice H."/>
            <person name="Bruce D."/>
            <person name="Goodwin L."/>
            <person name="Pitluck S."/>
            <person name="Sims D."/>
            <person name="Meincke L."/>
            <person name="Brettin T."/>
            <person name="Detter J.C."/>
            <person name="Han C."/>
            <person name="Larimer F."/>
            <person name="Land M."/>
            <person name="Hauser L."/>
            <person name="Kyrpides N."/>
            <person name="Ovchinnikova G."/>
            <person name="Kataeva I."/>
            <person name="Adams M.W.W."/>
        </authorList>
    </citation>
    <scope>NUCLEOTIDE SEQUENCE [LARGE SCALE GENOMIC DNA]</scope>
    <source>
        <strain>ATCC BAA-1888 / DSM 6725 / KCTC 15123 / Z-1320</strain>
    </source>
</reference>
<dbReference type="EC" id="2.7.2.8" evidence="1"/>
<dbReference type="EMBL" id="CP001393">
    <property type="protein sequence ID" value="ACM60179.1"/>
    <property type="molecule type" value="Genomic_DNA"/>
</dbReference>
<dbReference type="RefSeq" id="WP_015907588.1">
    <property type="nucleotide sequence ID" value="NC_012034.1"/>
</dbReference>
<dbReference type="SMR" id="B9MR75"/>
<dbReference type="STRING" id="521460.Athe_1078"/>
<dbReference type="GeneID" id="31772429"/>
<dbReference type="KEGG" id="ate:Athe_1078"/>
<dbReference type="eggNOG" id="COG0548">
    <property type="taxonomic scope" value="Bacteria"/>
</dbReference>
<dbReference type="HOGENOM" id="CLU_053680_0_0_9"/>
<dbReference type="UniPathway" id="UPA00068">
    <property type="reaction ID" value="UER00107"/>
</dbReference>
<dbReference type="Proteomes" id="UP000007723">
    <property type="component" value="Chromosome"/>
</dbReference>
<dbReference type="GO" id="GO:0005737">
    <property type="term" value="C:cytoplasm"/>
    <property type="evidence" value="ECO:0007669"/>
    <property type="project" value="UniProtKB-SubCell"/>
</dbReference>
<dbReference type="GO" id="GO:0003991">
    <property type="term" value="F:acetylglutamate kinase activity"/>
    <property type="evidence" value="ECO:0007669"/>
    <property type="project" value="UniProtKB-UniRule"/>
</dbReference>
<dbReference type="GO" id="GO:0005524">
    <property type="term" value="F:ATP binding"/>
    <property type="evidence" value="ECO:0007669"/>
    <property type="project" value="UniProtKB-UniRule"/>
</dbReference>
<dbReference type="GO" id="GO:0042450">
    <property type="term" value="P:arginine biosynthetic process via ornithine"/>
    <property type="evidence" value="ECO:0007669"/>
    <property type="project" value="UniProtKB-UniRule"/>
</dbReference>
<dbReference type="GO" id="GO:0006526">
    <property type="term" value="P:L-arginine biosynthetic process"/>
    <property type="evidence" value="ECO:0007669"/>
    <property type="project" value="UniProtKB-UniPathway"/>
</dbReference>
<dbReference type="CDD" id="cd04250">
    <property type="entry name" value="AAK_NAGK-C"/>
    <property type="match status" value="1"/>
</dbReference>
<dbReference type="FunFam" id="3.40.1160.10:FF:000004">
    <property type="entry name" value="Acetylglutamate kinase"/>
    <property type="match status" value="1"/>
</dbReference>
<dbReference type="Gene3D" id="3.40.1160.10">
    <property type="entry name" value="Acetylglutamate kinase-like"/>
    <property type="match status" value="1"/>
</dbReference>
<dbReference type="HAMAP" id="MF_00082">
    <property type="entry name" value="ArgB"/>
    <property type="match status" value="1"/>
</dbReference>
<dbReference type="InterPro" id="IPR036393">
    <property type="entry name" value="AceGlu_kinase-like_sf"/>
</dbReference>
<dbReference type="InterPro" id="IPR004662">
    <property type="entry name" value="AcgluKinase_fam"/>
</dbReference>
<dbReference type="InterPro" id="IPR037528">
    <property type="entry name" value="ArgB"/>
</dbReference>
<dbReference type="InterPro" id="IPR001048">
    <property type="entry name" value="Asp/Glu/Uridylate_kinase"/>
</dbReference>
<dbReference type="InterPro" id="IPR001057">
    <property type="entry name" value="Glu/AcGlu_kinase"/>
</dbReference>
<dbReference type="InterPro" id="IPR041727">
    <property type="entry name" value="NAGK-C"/>
</dbReference>
<dbReference type="NCBIfam" id="TIGR00761">
    <property type="entry name" value="argB"/>
    <property type="match status" value="1"/>
</dbReference>
<dbReference type="PANTHER" id="PTHR23342">
    <property type="entry name" value="N-ACETYLGLUTAMATE SYNTHASE"/>
    <property type="match status" value="1"/>
</dbReference>
<dbReference type="PANTHER" id="PTHR23342:SF0">
    <property type="entry name" value="N-ACETYLGLUTAMATE SYNTHASE, MITOCHONDRIAL"/>
    <property type="match status" value="1"/>
</dbReference>
<dbReference type="Pfam" id="PF00696">
    <property type="entry name" value="AA_kinase"/>
    <property type="match status" value="1"/>
</dbReference>
<dbReference type="PIRSF" id="PIRSF000728">
    <property type="entry name" value="NAGK"/>
    <property type="match status" value="1"/>
</dbReference>
<dbReference type="PRINTS" id="PR00474">
    <property type="entry name" value="GLU5KINASE"/>
</dbReference>
<dbReference type="SUPFAM" id="SSF53633">
    <property type="entry name" value="Carbamate kinase-like"/>
    <property type="match status" value="1"/>
</dbReference>